<accession>Q61212</accession>
<accession>Q3ZAW3</accession>
<proteinExistence type="evidence at transcript level"/>
<name>NPY6R_MOUSE</name>
<keyword id="KW-1003">Cell membrane</keyword>
<keyword id="KW-1015">Disulfide bond</keyword>
<keyword id="KW-0297">G-protein coupled receptor</keyword>
<keyword id="KW-0325">Glycoprotein</keyword>
<keyword id="KW-0449">Lipoprotein</keyword>
<keyword id="KW-0472">Membrane</keyword>
<keyword id="KW-0564">Palmitate</keyword>
<keyword id="KW-0675">Receptor</keyword>
<keyword id="KW-1185">Reference proteome</keyword>
<keyword id="KW-0807">Transducer</keyword>
<keyword id="KW-0812">Transmembrane</keyword>
<keyword id="KW-1133">Transmembrane helix</keyword>
<reference key="1">
    <citation type="journal article" date="1996" name="J. Biol. Chem.">
        <title>Cloning and expression of a novel neuropeptide Y receptor.</title>
        <authorList>
            <person name="Weinberg D.H."/>
            <person name="Sirinathsinghji D.J.S."/>
            <person name="Tan C.P."/>
            <person name="Shiao L.-L."/>
            <person name="Morin N."/>
            <person name="Rigby M.R."/>
            <person name="Heavens R.H."/>
            <person name="Rapoport D.R."/>
            <person name="Bayne M.L."/>
            <person name="Cascieri M.A."/>
            <person name="Strader C.D."/>
            <person name="Linemeyer D.L."/>
            <person name="Macneil D.J."/>
        </authorList>
    </citation>
    <scope>NUCLEOTIDE SEQUENCE [GENOMIC DNA]</scope>
    <source>
        <strain>129</strain>
    </source>
</reference>
<reference key="2">
    <citation type="journal article" date="1996" name="J. Biol. Chem.">
        <title>Molecular characterization of a second mouse pancreatic polypeptide receptor and its inactivated human homologue.</title>
        <authorList>
            <person name="Gregor P."/>
            <person name="Feng Y."/>
            <person name="Decarr L.B."/>
            <person name="Cornfield L.J."/>
            <person name="McCaleb M.L."/>
        </authorList>
    </citation>
    <scope>NUCLEOTIDE SEQUENCE [GENOMIC DNA]</scope>
    <scope>DEVELOPMENTAL STAGE</scope>
    <source>
        <strain>129/Sv</strain>
    </source>
</reference>
<reference key="3">
    <citation type="journal article" date="2005" name="Science">
        <title>The transcriptional landscape of the mammalian genome.</title>
        <authorList>
            <person name="Carninci P."/>
            <person name="Kasukawa T."/>
            <person name="Katayama S."/>
            <person name="Gough J."/>
            <person name="Frith M.C."/>
            <person name="Maeda N."/>
            <person name="Oyama R."/>
            <person name="Ravasi T."/>
            <person name="Lenhard B."/>
            <person name="Wells C."/>
            <person name="Kodzius R."/>
            <person name="Shimokawa K."/>
            <person name="Bajic V.B."/>
            <person name="Brenner S.E."/>
            <person name="Batalov S."/>
            <person name="Forrest A.R."/>
            <person name="Zavolan M."/>
            <person name="Davis M.J."/>
            <person name="Wilming L.G."/>
            <person name="Aidinis V."/>
            <person name="Allen J.E."/>
            <person name="Ambesi-Impiombato A."/>
            <person name="Apweiler R."/>
            <person name="Aturaliya R.N."/>
            <person name="Bailey T.L."/>
            <person name="Bansal M."/>
            <person name="Baxter L."/>
            <person name="Beisel K.W."/>
            <person name="Bersano T."/>
            <person name="Bono H."/>
            <person name="Chalk A.M."/>
            <person name="Chiu K.P."/>
            <person name="Choudhary V."/>
            <person name="Christoffels A."/>
            <person name="Clutterbuck D.R."/>
            <person name="Crowe M.L."/>
            <person name="Dalla E."/>
            <person name="Dalrymple B.P."/>
            <person name="de Bono B."/>
            <person name="Della Gatta G."/>
            <person name="di Bernardo D."/>
            <person name="Down T."/>
            <person name="Engstrom P."/>
            <person name="Fagiolini M."/>
            <person name="Faulkner G."/>
            <person name="Fletcher C.F."/>
            <person name="Fukushima T."/>
            <person name="Furuno M."/>
            <person name="Futaki S."/>
            <person name="Gariboldi M."/>
            <person name="Georgii-Hemming P."/>
            <person name="Gingeras T.R."/>
            <person name="Gojobori T."/>
            <person name="Green R.E."/>
            <person name="Gustincich S."/>
            <person name="Harbers M."/>
            <person name="Hayashi Y."/>
            <person name="Hensch T.K."/>
            <person name="Hirokawa N."/>
            <person name="Hill D."/>
            <person name="Huminiecki L."/>
            <person name="Iacono M."/>
            <person name="Ikeo K."/>
            <person name="Iwama A."/>
            <person name="Ishikawa T."/>
            <person name="Jakt M."/>
            <person name="Kanapin A."/>
            <person name="Katoh M."/>
            <person name="Kawasawa Y."/>
            <person name="Kelso J."/>
            <person name="Kitamura H."/>
            <person name="Kitano H."/>
            <person name="Kollias G."/>
            <person name="Krishnan S.P."/>
            <person name="Kruger A."/>
            <person name="Kummerfeld S.K."/>
            <person name="Kurochkin I.V."/>
            <person name="Lareau L.F."/>
            <person name="Lazarevic D."/>
            <person name="Lipovich L."/>
            <person name="Liu J."/>
            <person name="Liuni S."/>
            <person name="McWilliam S."/>
            <person name="Madan Babu M."/>
            <person name="Madera M."/>
            <person name="Marchionni L."/>
            <person name="Matsuda H."/>
            <person name="Matsuzawa S."/>
            <person name="Miki H."/>
            <person name="Mignone F."/>
            <person name="Miyake S."/>
            <person name="Morris K."/>
            <person name="Mottagui-Tabar S."/>
            <person name="Mulder N."/>
            <person name="Nakano N."/>
            <person name="Nakauchi H."/>
            <person name="Ng P."/>
            <person name="Nilsson R."/>
            <person name="Nishiguchi S."/>
            <person name="Nishikawa S."/>
            <person name="Nori F."/>
            <person name="Ohara O."/>
            <person name="Okazaki Y."/>
            <person name="Orlando V."/>
            <person name="Pang K.C."/>
            <person name="Pavan W.J."/>
            <person name="Pavesi G."/>
            <person name="Pesole G."/>
            <person name="Petrovsky N."/>
            <person name="Piazza S."/>
            <person name="Reed J."/>
            <person name="Reid J.F."/>
            <person name="Ring B.Z."/>
            <person name="Ringwald M."/>
            <person name="Rost B."/>
            <person name="Ruan Y."/>
            <person name="Salzberg S.L."/>
            <person name="Sandelin A."/>
            <person name="Schneider C."/>
            <person name="Schoenbach C."/>
            <person name="Sekiguchi K."/>
            <person name="Semple C.A."/>
            <person name="Seno S."/>
            <person name="Sessa L."/>
            <person name="Sheng Y."/>
            <person name="Shibata Y."/>
            <person name="Shimada H."/>
            <person name="Shimada K."/>
            <person name="Silva D."/>
            <person name="Sinclair B."/>
            <person name="Sperling S."/>
            <person name="Stupka E."/>
            <person name="Sugiura K."/>
            <person name="Sultana R."/>
            <person name="Takenaka Y."/>
            <person name="Taki K."/>
            <person name="Tammoja K."/>
            <person name="Tan S.L."/>
            <person name="Tang S."/>
            <person name="Taylor M.S."/>
            <person name="Tegner J."/>
            <person name="Teichmann S.A."/>
            <person name="Ueda H.R."/>
            <person name="van Nimwegen E."/>
            <person name="Verardo R."/>
            <person name="Wei C.L."/>
            <person name="Yagi K."/>
            <person name="Yamanishi H."/>
            <person name="Zabarovsky E."/>
            <person name="Zhu S."/>
            <person name="Zimmer A."/>
            <person name="Hide W."/>
            <person name="Bult C."/>
            <person name="Grimmond S.M."/>
            <person name="Teasdale R.D."/>
            <person name="Liu E.T."/>
            <person name="Brusic V."/>
            <person name="Quackenbush J."/>
            <person name="Wahlestedt C."/>
            <person name="Mattick J.S."/>
            <person name="Hume D.A."/>
            <person name="Kai C."/>
            <person name="Sasaki D."/>
            <person name="Tomaru Y."/>
            <person name="Fukuda S."/>
            <person name="Kanamori-Katayama M."/>
            <person name="Suzuki M."/>
            <person name="Aoki J."/>
            <person name="Arakawa T."/>
            <person name="Iida J."/>
            <person name="Imamura K."/>
            <person name="Itoh M."/>
            <person name="Kato T."/>
            <person name="Kawaji H."/>
            <person name="Kawagashira N."/>
            <person name="Kawashima T."/>
            <person name="Kojima M."/>
            <person name="Kondo S."/>
            <person name="Konno H."/>
            <person name="Nakano K."/>
            <person name="Ninomiya N."/>
            <person name="Nishio T."/>
            <person name="Okada M."/>
            <person name="Plessy C."/>
            <person name="Shibata K."/>
            <person name="Shiraki T."/>
            <person name="Suzuki S."/>
            <person name="Tagami M."/>
            <person name="Waki K."/>
            <person name="Watahiki A."/>
            <person name="Okamura-Oho Y."/>
            <person name="Suzuki H."/>
            <person name="Kawai J."/>
            <person name="Hayashizaki Y."/>
        </authorList>
    </citation>
    <scope>NUCLEOTIDE SEQUENCE [LARGE SCALE MRNA]</scope>
    <source>
        <strain>C57BL/6J</strain>
        <tissue>Ovary</tissue>
    </source>
</reference>
<reference key="4">
    <citation type="journal article" date="2004" name="Genome Res.">
        <title>The status, quality, and expansion of the NIH full-length cDNA project: the Mammalian Gene Collection (MGC).</title>
        <authorList>
            <consortium name="The MGC Project Team"/>
        </authorList>
    </citation>
    <scope>NUCLEOTIDE SEQUENCE [LARGE SCALE MRNA]</scope>
</reference>
<comment type="function">
    <text>Receptor for neuropeptide Y and peptide YY. The rank order of affinity of this receptor for pancreatic polypeptides is NPY = PYY &gt;= NPY (2-36) = [Leu-31, Pro-34] NPY &gt; NPY (13-36) &gt; PP. The activity of this receptor is mediated by G proteins that inhibits adenylate cyclase activity.</text>
</comment>
<comment type="subcellular location">
    <subcellularLocation>
        <location>Cell membrane</location>
        <topology>Multi-pass membrane protein</topology>
    </subcellularLocation>
</comment>
<comment type="tissue specificity">
    <text>Kidney and discrete regions of the hypothalamus including the suprachiasmatic nucleus, anterior hypothalamus, bed nucleus stria terminalis, and the ventromedial nucleus.</text>
</comment>
<comment type="developmental stage">
    <text evidence="3">Expressed in embryo at 7 dpc.</text>
</comment>
<comment type="similarity">
    <text evidence="2">Belongs to the G-protein coupled receptor 1 family.</text>
</comment>
<comment type="caution">
    <text evidence="4">Was originally called NPY5-R.</text>
</comment>
<evidence type="ECO:0000255" key="1"/>
<evidence type="ECO:0000255" key="2">
    <source>
        <dbReference type="PROSITE-ProRule" id="PRU00521"/>
    </source>
</evidence>
<evidence type="ECO:0000269" key="3">
    <source>
    </source>
</evidence>
<evidence type="ECO:0000305" key="4"/>
<sequence length="371" mass="42714">MEVLTNQPTPNKTSGKSNNSAFFYFESCQPPFLAILLLLIAYTVILIMGIFGNLSLIIIIFKKQREAQNVTNILIANLSLSDILVCVMCIPFTVIYTLMDHWVFGNTMCKLTSYVQSVSVSVSIFSLVLIAIERYQLIVNPRGWKPRVAHAYWGIILIWLISLTLSIPLFLSYHLTNEPFHNLSLPTDIYTHQVACVEIWPSKLNQLLFSTSLFMLQYFVPLGFILICYLKIVLCLRKRTRQVDRRKENKSRLNENKRVNVMLISIVVTFGACWLPLNIFNVIFDWYHEMLMSCHHDLVFVVCHLIAMVSTCINPLFYGFLNKNFQKDLMMLIHHCWCGEPQESYENIAMSTMHTDESKGSLKLAHIPTGI</sequence>
<gene>
    <name type="primary">Npy6r</name>
    <name type="synonym">Npy5r</name>
    <name type="synonym">Ppyr2</name>
    <name type="synonym">Y2b</name>
</gene>
<organism>
    <name type="scientific">Mus musculus</name>
    <name type="common">Mouse</name>
    <dbReference type="NCBI Taxonomy" id="10090"/>
    <lineage>
        <taxon>Eukaryota</taxon>
        <taxon>Metazoa</taxon>
        <taxon>Chordata</taxon>
        <taxon>Craniata</taxon>
        <taxon>Vertebrata</taxon>
        <taxon>Euteleostomi</taxon>
        <taxon>Mammalia</taxon>
        <taxon>Eutheria</taxon>
        <taxon>Euarchontoglires</taxon>
        <taxon>Glires</taxon>
        <taxon>Rodentia</taxon>
        <taxon>Myomorpha</taxon>
        <taxon>Muroidea</taxon>
        <taxon>Muridae</taxon>
        <taxon>Murinae</taxon>
        <taxon>Mus</taxon>
        <taxon>Mus</taxon>
    </lineage>
</organism>
<feature type="chain" id="PRO_0000069943" description="Neuropeptide Y receptor type 6">
    <location>
        <begin position="1"/>
        <end position="371"/>
    </location>
</feature>
<feature type="topological domain" description="Extracellular" evidence="1">
    <location>
        <begin position="1"/>
        <end position="31"/>
    </location>
</feature>
<feature type="transmembrane region" description="Helical; Name=1" evidence="1">
    <location>
        <begin position="32"/>
        <end position="52"/>
    </location>
</feature>
<feature type="topological domain" description="Cytoplasmic" evidence="1">
    <location>
        <begin position="53"/>
        <end position="82"/>
    </location>
</feature>
<feature type="transmembrane region" description="Helical; Name=2" evidence="1">
    <location>
        <begin position="83"/>
        <end position="103"/>
    </location>
</feature>
<feature type="topological domain" description="Extracellular" evidence="1">
    <location>
        <begin position="104"/>
        <end position="111"/>
    </location>
</feature>
<feature type="transmembrane region" description="Helical; Name=3" evidence="1">
    <location>
        <begin position="112"/>
        <end position="132"/>
    </location>
</feature>
<feature type="topological domain" description="Cytoplasmic" evidence="1">
    <location>
        <begin position="133"/>
        <end position="150"/>
    </location>
</feature>
<feature type="transmembrane region" description="Helical; Name=4" evidence="1">
    <location>
        <begin position="151"/>
        <end position="171"/>
    </location>
</feature>
<feature type="topological domain" description="Extracellular" evidence="1">
    <location>
        <begin position="172"/>
        <end position="206"/>
    </location>
</feature>
<feature type="transmembrane region" description="Helical; Name=5" evidence="1">
    <location>
        <begin position="207"/>
        <end position="227"/>
    </location>
</feature>
<feature type="topological domain" description="Cytoplasmic" evidence="1">
    <location>
        <begin position="228"/>
        <end position="263"/>
    </location>
</feature>
<feature type="transmembrane region" description="Helical; Name=6" evidence="1">
    <location>
        <begin position="264"/>
        <end position="284"/>
    </location>
</feature>
<feature type="topological domain" description="Extracellular" evidence="1">
    <location>
        <begin position="285"/>
        <end position="297"/>
    </location>
</feature>
<feature type="transmembrane region" description="Helical; Name=7" evidence="1">
    <location>
        <begin position="298"/>
        <end position="318"/>
    </location>
</feature>
<feature type="topological domain" description="Cytoplasmic" evidence="1">
    <location>
        <begin position="319"/>
        <end position="371"/>
    </location>
</feature>
<feature type="lipid moiety-binding region" description="S-palmitoyl cysteine" evidence="1">
    <location>
        <position position="336"/>
    </location>
</feature>
<feature type="glycosylation site" description="N-linked (GlcNAc...) asparagine" evidence="1">
    <location>
        <position position="11"/>
    </location>
</feature>
<feature type="glycosylation site" description="N-linked (GlcNAc...) asparagine" evidence="1">
    <location>
        <position position="18"/>
    </location>
</feature>
<feature type="glycosylation site" description="N-linked (GlcNAc...) asparagine" evidence="1">
    <location>
        <position position="182"/>
    </location>
</feature>
<feature type="disulfide bond" evidence="2">
    <location>
        <begin position="109"/>
        <end position="196"/>
    </location>
</feature>
<protein>
    <recommendedName>
        <fullName>Neuropeptide Y receptor type 6</fullName>
        <shortName>NPY6-R</shortName>
    </recommendedName>
    <alternativeName>
        <fullName>Pancreatic polypeptide receptor 2</fullName>
        <shortName>PP2</shortName>
    </alternativeName>
</protein>
<dbReference type="EMBL" id="U58367">
    <property type="protein sequence ID" value="AAB18624.1"/>
    <property type="molecule type" value="Genomic_DNA"/>
</dbReference>
<dbReference type="EMBL" id="U59430">
    <property type="protein sequence ID" value="AAB19188.1"/>
    <property type="molecule type" value="Genomic_DNA"/>
</dbReference>
<dbReference type="EMBL" id="AK030279">
    <property type="protein sequence ID" value="BAC26875.1"/>
    <property type="molecule type" value="mRNA"/>
</dbReference>
<dbReference type="EMBL" id="BC103620">
    <property type="protein sequence ID" value="AAI03621.1"/>
    <property type="molecule type" value="mRNA"/>
</dbReference>
<dbReference type="EMBL" id="BC103621">
    <property type="protein sequence ID" value="AAI03622.1"/>
    <property type="molecule type" value="mRNA"/>
</dbReference>
<dbReference type="EMBL" id="BC103622">
    <property type="protein sequence ID" value="AAI03623.1"/>
    <property type="molecule type" value="mRNA"/>
</dbReference>
<dbReference type="EMBL" id="BC103667">
    <property type="protein sequence ID" value="AAI03668.1"/>
    <property type="molecule type" value="mRNA"/>
</dbReference>
<dbReference type="CCDS" id="CCDS29227.1"/>
<dbReference type="RefSeq" id="NP_035065.1">
    <property type="nucleotide sequence ID" value="NM_010935.4"/>
</dbReference>
<dbReference type="SMR" id="Q61212"/>
<dbReference type="FunCoup" id="Q61212">
    <property type="interactions" value="644"/>
</dbReference>
<dbReference type="STRING" id="10090.ENSMUSP00000040797"/>
<dbReference type="GlyCosmos" id="Q61212">
    <property type="glycosylation" value="3 sites, No reported glycans"/>
</dbReference>
<dbReference type="GlyGen" id="Q61212">
    <property type="glycosylation" value="3 sites"/>
</dbReference>
<dbReference type="PhosphoSitePlus" id="Q61212"/>
<dbReference type="PaxDb" id="10090-ENSMUSP00000040797"/>
<dbReference type="ProteomicsDB" id="293886"/>
<dbReference type="DNASU" id="18169"/>
<dbReference type="Ensembl" id="ENSMUST00000042747.4">
    <property type="protein sequence ID" value="ENSMUSP00000040797.4"/>
    <property type="gene ID" value="ENSMUSG00000038071.4"/>
</dbReference>
<dbReference type="GeneID" id="18169"/>
<dbReference type="KEGG" id="mmu:18169"/>
<dbReference type="UCSC" id="uc008euv.1">
    <property type="organism name" value="mouse"/>
</dbReference>
<dbReference type="AGR" id="MGI:1098590"/>
<dbReference type="CTD" id="4888"/>
<dbReference type="MGI" id="MGI:1098590">
    <property type="gene designation" value="Npy6r"/>
</dbReference>
<dbReference type="VEuPathDB" id="HostDB:ENSMUSG00000038071"/>
<dbReference type="eggNOG" id="KOG3656">
    <property type="taxonomic scope" value="Eukaryota"/>
</dbReference>
<dbReference type="GeneTree" id="ENSGT00940000163511"/>
<dbReference type="HOGENOM" id="CLU_009579_6_1_1"/>
<dbReference type="InParanoid" id="Q61212"/>
<dbReference type="OMA" id="ISHAYWG"/>
<dbReference type="OrthoDB" id="9046662at2759"/>
<dbReference type="PhylomeDB" id="Q61212"/>
<dbReference type="TreeFam" id="TF315303"/>
<dbReference type="BioGRID-ORCS" id="18169">
    <property type="hits" value="2 hits in 77 CRISPR screens"/>
</dbReference>
<dbReference type="PRO" id="PR:Q61212"/>
<dbReference type="Proteomes" id="UP000000589">
    <property type="component" value="Chromosome 18"/>
</dbReference>
<dbReference type="RNAct" id="Q61212">
    <property type="molecule type" value="protein"/>
</dbReference>
<dbReference type="Bgee" id="ENSMUSG00000038071">
    <property type="expression patterns" value="Expressed in seminal vesicle and 19 other cell types or tissues"/>
</dbReference>
<dbReference type="GO" id="GO:0005886">
    <property type="term" value="C:plasma membrane"/>
    <property type="evidence" value="ECO:0007669"/>
    <property type="project" value="UniProtKB-SubCell"/>
</dbReference>
<dbReference type="GO" id="GO:0004983">
    <property type="term" value="F:neuropeptide Y receptor activity"/>
    <property type="evidence" value="ECO:0000314"/>
    <property type="project" value="MGI"/>
</dbReference>
<dbReference type="GO" id="GO:0001601">
    <property type="term" value="F:peptide YY receptor activity"/>
    <property type="evidence" value="ECO:0000314"/>
    <property type="project" value="MGI"/>
</dbReference>
<dbReference type="FunFam" id="1.20.1070.10:FF:000062">
    <property type="entry name" value="Neuropeptide Y receptor type 1"/>
    <property type="match status" value="1"/>
</dbReference>
<dbReference type="Gene3D" id="1.20.1070.10">
    <property type="entry name" value="Rhodopsin 7-helix transmembrane proteins"/>
    <property type="match status" value="1"/>
</dbReference>
<dbReference type="InterPro" id="IPR000276">
    <property type="entry name" value="GPCR_Rhodpsn"/>
</dbReference>
<dbReference type="InterPro" id="IPR017452">
    <property type="entry name" value="GPCR_Rhodpsn_7TM"/>
</dbReference>
<dbReference type="InterPro" id="IPR000986">
    <property type="entry name" value="NeuroY6_rcpt"/>
</dbReference>
<dbReference type="InterPro" id="IPR000611">
    <property type="entry name" value="NPY_rcpt"/>
</dbReference>
<dbReference type="PANTHER" id="PTHR24235">
    <property type="entry name" value="NEUROPEPTIDE Y RECEPTOR"/>
    <property type="match status" value="1"/>
</dbReference>
<dbReference type="PANTHER" id="PTHR24235:SF16">
    <property type="entry name" value="NEUROPEPTIDE Y RECEPTOR TYPE 6-RELATED"/>
    <property type="match status" value="1"/>
</dbReference>
<dbReference type="Pfam" id="PF00001">
    <property type="entry name" value="7tm_1"/>
    <property type="match status" value="1"/>
</dbReference>
<dbReference type="PRINTS" id="PR00237">
    <property type="entry name" value="GPCRRHODOPSN"/>
</dbReference>
<dbReference type="PRINTS" id="PR01017">
    <property type="entry name" value="NRPEPTIDEY6R"/>
</dbReference>
<dbReference type="PRINTS" id="PR01012">
    <property type="entry name" value="NRPEPTIDEYR"/>
</dbReference>
<dbReference type="SUPFAM" id="SSF81321">
    <property type="entry name" value="Family A G protein-coupled receptor-like"/>
    <property type="match status" value="1"/>
</dbReference>
<dbReference type="PROSITE" id="PS00237">
    <property type="entry name" value="G_PROTEIN_RECEP_F1_1"/>
    <property type="match status" value="1"/>
</dbReference>
<dbReference type="PROSITE" id="PS50262">
    <property type="entry name" value="G_PROTEIN_RECEP_F1_2"/>
    <property type="match status" value="1"/>
</dbReference>